<protein>
    <recommendedName>
        <fullName evidence="1">Erythronate-4-phosphate dehydrogenase</fullName>
        <ecNumber evidence="1">1.1.1.290</ecNumber>
    </recommendedName>
</protein>
<proteinExistence type="inferred from homology"/>
<dbReference type="EC" id="1.1.1.290" evidence="1"/>
<dbReference type="EMBL" id="CP000753">
    <property type="protein sequence ID" value="ABS08896.1"/>
    <property type="molecule type" value="Genomic_DNA"/>
</dbReference>
<dbReference type="RefSeq" id="WP_012089588.1">
    <property type="nucleotide sequence ID" value="NC_009665.1"/>
</dbReference>
<dbReference type="SMR" id="A6WQ07"/>
<dbReference type="KEGG" id="sbm:Shew185_2762"/>
<dbReference type="HOGENOM" id="CLU_019796_4_0_6"/>
<dbReference type="UniPathway" id="UPA00244">
    <property type="reaction ID" value="UER00310"/>
</dbReference>
<dbReference type="GO" id="GO:0005737">
    <property type="term" value="C:cytoplasm"/>
    <property type="evidence" value="ECO:0007669"/>
    <property type="project" value="UniProtKB-SubCell"/>
</dbReference>
<dbReference type="GO" id="GO:0033711">
    <property type="term" value="F:4-phosphoerythronate dehydrogenase activity"/>
    <property type="evidence" value="ECO:0007669"/>
    <property type="project" value="UniProtKB-EC"/>
</dbReference>
<dbReference type="GO" id="GO:0051287">
    <property type="term" value="F:NAD binding"/>
    <property type="evidence" value="ECO:0007669"/>
    <property type="project" value="InterPro"/>
</dbReference>
<dbReference type="GO" id="GO:0046983">
    <property type="term" value="F:protein dimerization activity"/>
    <property type="evidence" value="ECO:0007669"/>
    <property type="project" value="InterPro"/>
</dbReference>
<dbReference type="GO" id="GO:0008615">
    <property type="term" value="P:pyridoxine biosynthetic process"/>
    <property type="evidence" value="ECO:0007669"/>
    <property type="project" value="UniProtKB-UniRule"/>
</dbReference>
<dbReference type="CDD" id="cd12158">
    <property type="entry name" value="ErythrP_dh"/>
    <property type="match status" value="1"/>
</dbReference>
<dbReference type="FunFam" id="3.40.50.720:FF:000890">
    <property type="entry name" value="Erythronate-4-phosphate dehydrogenase"/>
    <property type="match status" value="1"/>
</dbReference>
<dbReference type="Gene3D" id="3.30.1370.170">
    <property type="match status" value="1"/>
</dbReference>
<dbReference type="Gene3D" id="3.40.50.720">
    <property type="entry name" value="NAD(P)-binding Rossmann-like Domain"/>
    <property type="match status" value="2"/>
</dbReference>
<dbReference type="HAMAP" id="MF_01825">
    <property type="entry name" value="PdxB"/>
    <property type="match status" value="1"/>
</dbReference>
<dbReference type="InterPro" id="IPR050418">
    <property type="entry name" value="D-iso_2-hydroxyacid_DH_PdxB"/>
</dbReference>
<dbReference type="InterPro" id="IPR006139">
    <property type="entry name" value="D-isomer_2_OHA_DH_cat_dom"/>
</dbReference>
<dbReference type="InterPro" id="IPR029753">
    <property type="entry name" value="D-isomer_DH_CS"/>
</dbReference>
<dbReference type="InterPro" id="IPR006140">
    <property type="entry name" value="D-isomer_DH_NAD-bd"/>
</dbReference>
<dbReference type="InterPro" id="IPR020921">
    <property type="entry name" value="Erythronate-4-P_DHase"/>
</dbReference>
<dbReference type="InterPro" id="IPR024531">
    <property type="entry name" value="Erythronate-4-P_DHase_dimer"/>
</dbReference>
<dbReference type="InterPro" id="IPR036291">
    <property type="entry name" value="NAD(P)-bd_dom_sf"/>
</dbReference>
<dbReference type="InterPro" id="IPR038251">
    <property type="entry name" value="PdxB_dimer_sf"/>
</dbReference>
<dbReference type="PANTHER" id="PTHR43761:SF1">
    <property type="entry name" value="D-ISOMER SPECIFIC 2-HYDROXYACID DEHYDROGENASE CATALYTIC DOMAIN-CONTAINING PROTEIN-RELATED"/>
    <property type="match status" value="1"/>
</dbReference>
<dbReference type="PANTHER" id="PTHR43761">
    <property type="entry name" value="D-ISOMER SPECIFIC 2-HYDROXYACID DEHYDROGENASE FAMILY PROTEIN (AFU_ORTHOLOGUE AFUA_1G13630)"/>
    <property type="match status" value="1"/>
</dbReference>
<dbReference type="Pfam" id="PF00389">
    <property type="entry name" value="2-Hacid_dh"/>
    <property type="match status" value="1"/>
</dbReference>
<dbReference type="Pfam" id="PF02826">
    <property type="entry name" value="2-Hacid_dh_C"/>
    <property type="match status" value="1"/>
</dbReference>
<dbReference type="Pfam" id="PF11890">
    <property type="entry name" value="DUF3410"/>
    <property type="match status" value="1"/>
</dbReference>
<dbReference type="SUPFAM" id="SSF52283">
    <property type="entry name" value="Formate/glycerate dehydrogenase catalytic domain-like"/>
    <property type="match status" value="1"/>
</dbReference>
<dbReference type="SUPFAM" id="SSF51735">
    <property type="entry name" value="NAD(P)-binding Rossmann-fold domains"/>
    <property type="match status" value="1"/>
</dbReference>
<dbReference type="PROSITE" id="PS00671">
    <property type="entry name" value="D_2_HYDROXYACID_DH_3"/>
    <property type="match status" value="1"/>
</dbReference>
<comment type="function">
    <text evidence="1">Catalyzes the oxidation of erythronate-4-phosphate to 3-hydroxy-2-oxo-4-phosphonooxybutanoate.</text>
</comment>
<comment type="catalytic activity">
    <reaction evidence="1">
        <text>4-phospho-D-erythronate + NAD(+) = (R)-3-hydroxy-2-oxo-4-phosphooxybutanoate + NADH + H(+)</text>
        <dbReference type="Rhea" id="RHEA:18829"/>
        <dbReference type="ChEBI" id="CHEBI:15378"/>
        <dbReference type="ChEBI" id="CHEBI:57540"/>
        <dbReference type="ChEBI" id="CHEBI:57945"/>
        <dbReference type="ChEBI" id="CHEBI:58538"/>
        <dbReference type="ChEBI" id="CHEBI:58766"/>
        <dbReference type="EC" id="1.1.1.290"/>
    </reaction>
</comment>
<comment type="pathway">
    <text evidence="1">Cofactor biosynthesis; pyridoxine 5'-phosphate biosynthesis; pyridoxine 5'-phosphate from D-erythrose 4-phosphate: step 2/5.</text>
</comment>
<comment type="subunit">
    <text evidence="1">Homodimer.</text>
</comment>
<comment type="subcellular location">
    <subcellularLocation>
        <location evidence="1">Cytoplasm</location>
    </subcellularLocation>
</comment>
<comment type="similarity">
    <text evidence="1">Belongs to the D-isomer specific 2-hydroxyacid dehydrogenase family. PdxB subfamily.</text>
</comment>
<sequence>MKILVDENMPYVEPLFGDLGDIIPVNGRTLTAEQVRDADVLLVRSVTKVNAELLSGNNKLKFVGSATIGTDHVDLAYLAERNIPFSNAPGCNATAVGEFAFIAMLELAQRFNSPLKGKVVGIVGAGNTGTATAKCLQAYGIKVLLNDPIKAAEGDPRSFVSLDTITAQADIISLHVPITRTGEHKTKHLFDEARLKALKPNTWLVNCCRGDVIDNQALIKVKRQRDDLKLVLDVWEGEPTPLPELVPLAEFATPHIAGYSLEGKARGTFMLYQKLCQLLNITADKSLLDLLPTFNIKAVELATAPNEKALLQLARFVYDLRDDDKMFRNTFLNENGFDTMRKNHQHRREFSALALAYDGQSEVDWLSNLGFSGVGQ</sequence>
<reference key="1">
    <citation type="submission" date="2007-07" db="EMBL/GenBank/DDBJ databases">
        <title>Complete sequence of chromosome of Shewanella baltica OS185.</title>
        <authorList>
            <consortium name="US DOE Joint Genome Institute"/>
            <person name="Copeland A."/>
            <person name="Lucas S."/>
            <person name="Lapidus A."/>
            <person name="Barry K."/>
            <person name="Glavina del Rio T."/>
            <person name="Dalin E."/>
            <person name="Tice H."/>
            <person name="Pitluck S."/>
            <person name="Sims D."/>
            <person name="Brettin T."/>
            <person name="Bruce D."/>
            <person name="Detter J.C."/>
            <person name="Han C."/>
            <person name="Schmutz J."/>
            <person name="Larimer F."/>
            <person name="Land M."/>
            <person name="Hauser L."/>
            <person name="Kyrpides N."/>
            <person name="Mikhailova N."/>
            <person name="Brettar I."/>
            <person name="Rodrigues J."/>
            <person name="Konstantinidis K."/>
            <person name="Tiedje J."/>
            <person name="Richardson P."/>
        </authorList>
    </citation>
    <scope>NUCLEOTIDE SEQUENCE [LARGE SCALE GENOMIC DNA]</scope>
    <source>
        <strain>OS185</strain>
    </source>
</reference>
<accession>A6WQ07</accession>
<feature type="chain" id="PRO_1000070407" description="Erythronate-4-phosphate dehydrogenase">
    <location>
        <begin position="1"/>
        <end position="376"/>
    </location>
</feature>
<feature type="active site" evidence="1">
    <location>
        <position position="209"/>
    </location>
</feature>
<feature type="active site" evidence="1">
    <location>
        <position position="238"/>
    </location>
</feature>
<feature type="active site" description="Proton donor" evidence="1">
    <location>
        <position position="255"/>
    </location>
</feature>
<feature type="binding site" evidence="1">
    <location>
        <position position="45"/>
    </location>
    <ligand>
        <name>substrate</name>
    </ligand>
</feature>
<feature type="binding site" evidence="1">
    <location>
        <position position="67"/>
    </location>
    <ligand>
        <name>substrate</name>
    </ligand>
</feature>
<feature type="binding site" evidence="1">
    <location>
        <position position="147"/>
    </location>
    <ligand>
        <name>NAD(+)</name>
        <dbReference type="ChEBI" id="CHEBI:57540"/>
    </ligand>
</feature>
<feature type="binding site" evidence="1">
    <location>
        <position position="233"/>
    </location>
    <ligand>
        <name>NAD(+)</name>
        <dbReference type="ChEBI" id="CHEBI:57540"/>
    </ligand>
</feature>
<feature type="binding site" evidence="1">
    <location>
        <position position="258"/>
    </location>
    <ligand>
        <name>NAD(+)</name>
        <dbReference type="ChEBI" id="CHEBI:57540"/>
    </ligand>
</feature>
<feature type="binding site" evidence="1">
    <location>
        <position position="259"/>
    </location>
    <ligand>
        <name>substrate</name>
    </ligand>
</feature>
<gene>
    <name evidence="1" type="primary">pdxB</name>
    <name type="ordered locus">Shew185_2762</name>
</gene>
<keyword id="KW-0963">Cytoplasm</keyword>
<keyword id="KW-0520">NAD</keyword>
<keyword id="KW-0560">Oxidoreductase</keyword>
<keyword id="KW-0664">Pyridoxine biosynthesis</keyword>
<name>PDXB_SHEB8</name>
<organism>
    <name type="scientific">Shewanella baltica (strain OS185)</name>
    <dbReference type="NCBI Taxonomy" id="402882"/>
    <lineage>
        <taxon>Bacteria</taxon>
        <taxon>Pseudomonadati</taxon>
        <taxon>Pseudomonadota</taxon>
        <taxon>Gammaproteobacteria</taxon>
        <taxon>Alteromonadales</taxon>
        <taxon>Shewanellaceae</taxon>
        <taxon>Shewanella</taxon>
    </lineage>
</organism>
<evidence type="ECO:0000255" key="1">
    <source>
        <dbReference type="HAMAP-Rule" id="MF_01825"/>
    </source>
</evidence>